<protein>
    <recommendedName>
        <fullName evidence="5">Endoplasmic reticulum membrane adapter protein XK</fullName>
    </recommendedName>
    <alternativeName>
        <fullName>Membrane transport protein XK</fullName>
    </alternativeName>
    <alternativeName>
        <fullName>XK-related protein 1</fullName>
    </alternativeName>
</protein>
<name>XK_PANTR</name>
<accession>Q49LS5</accession>
<gene>
    <name type="primary">XK</name>
    <name type="synonym">XKR1</name>
    <name type="synonym">XRG1</name>
</gene>
<reference key="1">
    <citation type="submission" date="2004-07" db="EMBL/GenBank/DDBJ databases">
        <title>A superfamily of XK-related genes (XRG) widely expressed in vertebrates and invertebrates.</title>
        <authorList>
            <person name="Huang C.-H."/>
            <person name="Chen Y."/>
        </authorList>
    </citation>
    <scope>NUCLEOTIDE SEQUENCE [MRNA]</scope>
</reference>
<feature type="chain" id="PRO_0000190769" description="Endoplasmic reticulum membrane adapter protein XK">
    <location>
        <begin position="1"/>
        <end position="444"/>
    </location>
</feature>
<feature type="topological domain" description="Cytoplasmic" evidence="3">
    <location>
        <begin position="1"/>
        <end position="2"/>
    </location>
</feature>
<feature type="transmembrane region" description="Helical" evidence="3">
    <location>
        <begin position="3"/>
        <end position="23"/>
    </location>
</feature>
<feature type="topological domain" description="Extracellular" evidence="3">
    <location>
        <begin position="24"/>
        <end position="37"/>
    </location>
</feature>
<feature type="transmembrane region" description="Helical" evidence="3">
    <location>
        <begin position="38"/>
        <end position="58"/>
    </location>
</feature>
<feature type="topological domain" description="Cytoplasmic" evidence="3">
    <location>
        <begin position="59"/>
        <end position="68"/>
    </location>
</feature>
<feature type="transmembrane region" description="Helical" evidence="3">
    <location>
        <begin position="69"/>
        <end position="89"/>
    </location>
</feature>
<feature type="topological domain" description="Extracellular" evidence="3">
    <location>
        <begin position="90"/>
        <end position="140"/>
    </location>
</feature>
<feature type="transmembrane region" description="Helical" evidence="3">
    <location>
        <begin position="141"/>
        <end position="161"/>
    </location>
</feature>
<feature type="topological domain" description="Cytoplasmic" evidence="3">
    <location>
        <begin position="162"/>
        <end position="171"/>
    </location>
</feature>
<feature type="transmembrane region" description="Helical" evidence="3">
    <location>
        <begin position="172"/>
        <end position="192"/>
    </location>
</feature>
<feature type="topological domain" description="Extracellular" evidence="3">
    <location>
        <begin position="193"/>
        <end position="208"/>
    </location>
</feature>
<feature type="transmembrane region" description="Helical" evidence="3">
    <location>
        <begin position="209"/>
        <end position="229"/>
    </location>
</feature>
<feature type="topological domain" description="Cytoplasmic" evidence="3">
    <location>
        <begin position="230"/>
        <end position="235"/>
    </location>
</feature>
<feature type="transmembrane region" description="Helical" evidence="3">
    <location>
        <begin position="236"/>
        <end position="256"/>
    </location>
</feature>
<feature type="topological domain" description="Extracellular" evidence="3">
    <location>
        <begin position="257"/>
        <end position="277"/>
    </location>
</feature>
<feature type="transmembrane region" description="Helical" evidence="3">
    <location>
        <begin position="278"/>
        <end position="298"/>
    </location>
</feature>
<feature type="topological domain" description="Cytoplasmic" evidence="3">
    <location>
        <begin position="299"/>
        <end position="317"/>
    </location>
</feature>
<feature type="transmembrane region" description="Helical" evidence="3">
    <location>
        <begin position="318"/>
        <end position="338"/>
    </location>
</feature>
<feature type="topological domain" description="Extracellular" evidence="3">
    <location>
        <begin position="339"/>
        <end position="349"/>
    </location>
</feature>
<feature type="transmembrane region" description="Helical" evidence="3">
    <location>
        <begin position="350"/>
        <end position="370"/>
    </location>
</feature>
<feature type="topological domain" description="Cytoplasmic" evidence="3">
    <location>
        <begin position="371"/>
        <end position="444"/>
    </location>
</feature>
<feature type="region of interest" description="Disordered" evidence="4">
    <location>
        <begin position="408"/>
        <end position="444"/>
    </location>
</feature>
<feature type="compositionally biased region" description="Basic and acidic residues" evidence="4">
    <location>
        <begin position="408"/>
        <end position="422"/>
    </location>
</feature>
<feature type="compositionally biased region" description="Low complexity" evidence="4">
    <location>
        <begin position="423"/>
        <end position="432"/>
    </location>
</feature>
<feature type="modified residue" description="Phosphoserine" evidence="2">
    <location>
        <position position="115"/>
    </location>
</feature>
<feature type="disulfide bond" description="Interchain (with C-72 in Kell)" evidence="1">
    <location>
        <position position="347"/>
    </location>
</feature>
<proteinExistence type="evidence at transcript level"/>
<organism>
    <name type="scientific">Pan troglodytes</name>
    <name type="common">Chimpanzee</name>
    <dbReference type="NCBI Taxonomy" id="9598"/>
    <lineage>
        <taxon>Eukaryota</taxon>
        <taxon>Metazoa</taxon>
        <taxon>Chordata</taxon>
        <taxon>Craniata</taxon>
        <taxon>Vertebrata</taxon>
        <taxon>Euteleostomi</taxon>
        <taxon>Mammalia</taxon>
        <taxon>Eutheria</taxon>
        <taxon>Euarchontoglires</taxon>
        <taxon>Primates</taxon>
        <taxon>Haplorrhini</taxon>
        <taxon>Catarrhini</taxon>
        <taxon>Hominidae</taxon>
        <taxon>Pan</taxon>
    </lineage>
</organism>
<sequence length="444" mass="50936">MKFPASVLASVFLFVAETTAALSLSSTYRSGGDRMWQALTLLFSLLPCALVQLTLFFVHRDLSRDRPLVLLLHLLQLGPLFRCFEVFCIYFQSGNNEEPYVSITKKRQMPKNGLSEEIEKEVGQAEGKLITHRSAFSRASVIQAFLGSAPQLTLQLYISVMQQDVTVGRSLLMTISLLSIVYGALRCNILAIKIKYDEYEVKVKPLAYVCIFLWRSFEIATRVVVLVLFTSVLKTWVVVIILINFFSFFLYPWILFWCSGSPFPENIEKALSRVGTTIVLCFLTLLYTGINMFCWSAVQLKIDSPDLISKSHNWYQLLVYYMIRFIENAILLLLWYLFKTDIYMYVCAPLLVLQLLIGYCTAILFMLVFYQFFHPCKKLFSSSVSEGFQRWLRCFCWACRQQKPCEPIGKEDLQSSRDRDETPSSSKTSPEPGQFLNAEDLCSA</sequence>
<keyword id="KW-0029">Amino-acid transport</keyword>
<keyword id="KW-1015">Disulfide bond</keyword>
<keyword id="KW-0256">Endoplasmic reticulum</keyword>
<keyword id="KW-0472">Membrane</keyword>
<keyword id="KW-0597">Phosphoprotein</keyword>
<keyword id="KW-1185">Reference proteome</keyword>
<keyword id="KW-0812">Transmembrane</keyword>
<keyword id="KW-1133">Transmembrane helix</keyword>
<keyword id="KW-0813">Transport</keyword>
<dbReference type="EMBL" id="AY702904">
    <property type="protein sequence ID" value="AAV83780.1"/>
    <property type="molecule type" value="mRNA"/>
</dbReference>
<dbReference type="RefSeq" id="NP_001073390.1">
    <property type="nucleotide sequence ID" value="NM_001079921.1"/>
</dbReference>
<dbReference type="SMR" id="Q49LS5"/>
<dbReference type="STRING" id="9598.ENSPTRP00000068858"/>
<dbReference type="PaxDb" id="9598-ENSPTRP00000054870"/>
<dbReference type="GeneID" id="473563"/>
<dbReference type="KEGG" id="ptr:473563"/>
<dbReference type="CTD" id="7504"/>
<dbReference type="eggNOG" id="ENOG502QTTF">
    <property type="taxonomic scope" value="Eukaryota"/>
</dbReference>
<dbReference type="InParanoid" id="Q49LS5"/>
<dbReference type="OrthoDB" id="8727at9604"/>
<dbReference type="Proteomes" id="UP000002277">
    <property type="component" value="Unplaced"/>
</dbReference>
<dbReference type="GO" id="GO:0005789">
    <property type="term" value="C:endoplasmic reticulum membrane"/>
    <property type="evidence" value="ECO:0000250"/>
    <property type="project" value="UniProtKB"/>
</dbReference>
<dbReference type="GO" id="GO:0005886">
    <property type="term" value="C:plasma membrane"/>
    <property type="evidence" value="ECO:0000250"/>
    <property type="project" value="UniProtKB"/>
</dbReference>
<dbReference type="GO" id="GO:0030674">
    <property type="term" value="F:protein-macromolecule adaptor activity"/>
    <property type="evidence" value="ECO:0000250"/>
    <property type="project" value="UniProtKB"/>
</dbReference>
<dbReference type="GO" id="GO:0006865">
    <property type="term" value="P:amino acid transport"/>
    <property type="evidence" value="ECO:0007669"/>
    <property type="project" value="UniProtKB-KW"/>
</dbReference>
<dbReference type="InterPro" id="IPR018629">
    <property type="entry name" value="XK-rel"/>
</dbReference>
<dbReference type="InterPro" id="IPR051773">
    <property type="entry name" value="XK-related_adapter"/>
</dbReference>
<dbReference type="PANTHER" id="PTHR14297:SF8">
    <property type="entry name" value="ENDOPLASMIC RETICULUM MEMBRANE ADAPTER PROTEIN XK"/>
    <property type="match status" value="1"/>
</dbReference>
<dbReference type="PANTHER" id="PTHR14297">
    <property type="entry name" value="MEMBRANE TRANSPORT PROTEIN XK FAMILY MEMBER"/>
    <property type="match status" value="1"/>
</dbReference>
<dbReference type="Pfam" id="PF09815">
    <property type="entry name" value="XK-related"/>
    <property type="match status" value="1"/>
</dbReference>
<evidence type="ECO:0000250" key="1">
    <source>
        <dbReference type="UniProtKB" id="P51811"/>
    </source>
</evidence>
<evidence type="ECO:0000250" key="2">
    <source>
        <dbReference type="UniProtKB" id="Q5GH61"/>
    </source>
</evidence>
<evidence type="ECO:0000255" key="3"/>
<evidence type="ECO:0000256" key="4">
    <source>
        <dbReference type="SAM" id="MobiDB-lite"/>
    </source>
</evidence>
<evidence type="ECO:0000305" key="5"/>
<comment type="function">
    <text evidence="1">Recruits the lipid transfer protein VPS13A from lipid droplets to the endoplasmic reticulum (ER) membrane.</text>
</comment>
<comment type="subunit">
    <text evidence="1">Heterodimer with Kell; disulfide-linked. Interacts with VPS13A.</text>
</comment>
<comment type="subcellular location">
    <subcellularLocation>
        <location evidence="1">Endoplasmic reticulum membrane</location>
        <topology evidence="1">Multi-pass membrane protein</topology>
    </subcellularLocation>
</comment>
<comment type="similarity">
    <text evidence="5">Belongs to the XK family.</text>
</comment>